<organism>
    <name type="scientific">Xanthomonas axonopodis pv. citri (strain 306)</name>
    <dbReference type="NCBI Taxonomy" id="190486"/>
    <lineage>
        <taxon>Bacteria</taxon>
        <taxon>Pseudomonadati</taxon>
        <taxon>Pseudomonadota</taxon>
        <taxon>Gammaproteobacteria</taxon>
        <taxon>Lysobacterales</taxon>
        <taxon>Lysobacteraceae</taxon>
        <taxon>Xanthomonas</taxon>
    </lineage>
</organism>
<comment type="function">
    <text evidence="1">Forms part of the ribosomal stalk, playing a central role in the interaction of the ribosome with GTP-bound translation factors.</text>
</comment>
<comment type="subunit">
    <text evidence="1">Part of the ribosomal stalk of the 50S ribosomal subunit. The N-terminus interacts with L11 and the large rRNA to form the base of the stalk. The C-terminus forms an elongated spine to which L12 dimers bind in a sequential fashion forming a multimeric L10(L12)X complex.</text>
</comment>
<comment type="similarity">
    <text evidence="1">Belongs to the universal ribosomal protein uL10 family.</text>
</comment>
<keyword id="KW-0687">Ribonucleoprotein</keyword>
<keyword id="KW-0689">Ribosomal protein</keyword>
<keyword id="KW-0694">RNA-binding</keyword>
<keyword id="KW-0699">rRNA-binding</keyword>
<accession>Q8PNT2</accession>
<sequence>MALNLSQKQEVVAELADIAAKAHSLIAAEYAGTTVSQMTAMRKQARETGVFLKVVKNTLAARAVEGTDFAVAADKLVGPLLYAFSMEEPGAAGRLIKEFAKSNDKLQAKVVSIGGELFPAGHVDVLASLPTRDQALAMLARVLSEPAAMFARAVKAVGDKQGGGDEAAAPVAETAEA</sequence>
<protein>
    <recommendedName>
        <fullName evidence="1">Large ribosomal subunit protein uL10</fullName>
    </recommendedName>
    <alternativeName>
        <fullName evidence="2">50S ribosomal protein L10</fullName>
    </alternativeName>
</protein>
<feature type="chain" id="PRO_0000154749" description="Large ribosomal subunit protein uL10">
    <location>
        <begin position="1"/>
        <end position="177"/>
    </location>
</feature>
<name>RL10_XANAC</name>
<dbReference type="EMBL" id="AE008923">
    <property type="protein sequence ID" value="AAM35846.1"/>
    <property type="molecule type" value="Genomic_DNA"/>
</dbReference>
<dbReference type="RefSeq" id="WP_005930748.1">
    <property type="nucleotide sequence ID" value="NC_003919.1"/>
</dbReference>
<dbReference type="SMR" id="Q8PNT2"/>
<dbReference type="GeneID" id="97509326"/>
<dbReference type="KEGG" id="xac:XAC0963"/>
<dbReference type="eggNOG" id="COG0244">
    <property type="taxonomic scope" value="Bacteria"/>
</dbReference>
<dbReference type="HOGENOM" id="CLU_092227_0_1_6"/>
<dbReference type="Proteomes" id="UP000000576">
    <property type="component" value="Chromosome"/>
</dbReference>
<dbReference type="GO" id="GO:1990904">
    <property type="term" value="C:ribonucleoprotein complex"/>
    <property type="evidence" value="ECO:0007669"/>
    <property type="project" value="UniProtKB-KW"/>
</dbReference>
<dbReference type="GO" id="GO:0005840">
    <property type="term" value="C:ribosome"/>
    <property type="evidence" value="ECO:0007669"/>
    <property type="project" value="UniProtKB-KW"/>
</dbReference>
<dbReference type="GO" id="GO:0070180">
    <property type="term" value="F:large ribosomal subunit rRNA binding"/>
    <property type="evidence" value="ECO:0007669"/>
    <property type="project" value="UniProtKB-UniRule"/>
</dbReference>
<dbReference type="GO" id="GO:0006412">
    <property type="term" value="P:translation"/>
    <property type="evidence" value="ECO:0007669"/>
    <property type="project" value="UniProtKB-UniRule"/>
</dbReference>
<dbReference type="CDD" id="cd05797">
    <property type="entry name" value="Ribosomal_L10"/>
    <property type="match status" value="1"/>
</dbReference>
<dbReference type="FunFam" id="3.30.70.1730:FF:000001">
    <property type="entry name" value="50S ribosomal protein L10"/>
    <property type="match status" value="1"/>
</dbReference>
<dbReference type="Gene3D" id="3.30.70.1730">
    <property type="match status" value="1"/>
</dbReference>
<dbReference type="HAMAP" id="MF_00362">
    <property type="entry name" value="Ribosomal_uL10"/>
    <property type="match status" value="1"/>
</dbReference>
<dbReference type="InterPro" id="IPR001790">
    <property type="entry name" value="Ribosomal_uL10"/>
</dbReference>
<dbReference type="InterPro" id="IPR043141">
    <property type="entry name" value="Ribosomal_uL10-like_sf"/>
</dbReference>
<dbReference type="InterPro" id="IPR022973">
    <property type="entry name" value="Ribosomal_uL10_bac"/>
</dbReference>
<dbReference type="InterPro" id="IPR047865">
    <property type="entry name" value="Ribosomal_uL10_bac_type"/>
</dbReference>
<dbReference type="NCBIfam" id="NF000955">
    <property type="entry name" value="PRK00099.1-1"/>
    <property type="match status" value="1"/>
</dbReference>
<dbReference type="PANTHER" id="PTHR11560">
    <property type="entry name" value="39S RIBOSOMAL PROTEIN L10, MITOCHONDRIAL"/>
    <property type="match status" value="1"/>
</dbReference>
<dbReference type="Pfam" id="PF00466">
    <property type="entry name" value="Ribosomal_L10"/>
    <property type="match status" value="1"/>
</dbReference>
<dbReference type="SUPFAM" id="SSF160369">
    <property type="entry name" value="Ribosomal protein L10-like"/>
    <property type="match status" value="1"/>
</dbReference>
<reference key="1">
    <citation type="journal article" date="2002" name="Nature">
        <title>Comparison of the genomes of two Xanthomonas pathogens with differing host specificities.</title>
        <authorList>
            <person name="da Silva A.C.R."/>
            <person name="Ferro J.A."/>
            <person name="Reinach F.C."/>
            <person name="Farah C.S."/>
            <person name="Furlan L.R."/>
            <person name="Quaggio R.B."/>
            <person name="Monteiro-Vitorello C.B."/>
            <person name="Van Sluys M.A."/>
            <person name="Almeida N.F. Jr."/>
            <person name="Alves L.M.C."/>
            <person name="do Amaral A.M."/>
            <person name="Bertolini M.C."/>
            <person name="Camargo L.E.A."/>
            <person name="Camarotte G."/>
            <person name="Cannavan F."/>
            <person name="Cardozo J."/>
            <person name="Chambergo F."/>
            <person name="Ciapina L.P."/>
            <person name="Cicarelli R.M.B."/>
            <person name="Coutinho L.L."/>
            <person name="Cursino-Santos J.R."/>
            <person name="El-Dorry H."/>
            <person name="Faria J.B."/>
            <person name="Ferreira A.J.S."/>
            <person name="Ferreira R.C.C."/>
            <person name="Ferro M.I.T."/>
            <person name="Formighieri E.F."/>
            <person name="Franco M.C."/>
            <person name="Greggio C.C."/>
            <person name="Gruber A."/>
            <person name="Katsuyama A.M."/>
            <person name="Kishi L.T."/>
            <person name="Leite R.P."/>
            <person name="Lemos E.G.M."/>
            <person name="Lemos M.V.F."/>
            <person name="Locali E.C."/>
            <person name="Machado M.A."/>
            <person name="Madeira A.M.B.N."/>
            <person name="Martinez-Rossi N.M."/>
            <person name="Martins E.C."/>
            <person name="Meidanis J."/>
            <person name="Menck C.F.M."/>
            <person name="Miyaki C.Y."/>
            <person name="Moon D.H."/>
            <person name="Moreira L.M."/>
            <person name="Novo M.T.M."/>
            <person name="Okura V.K."/>
            <person name="Oliveira M.C."/>
            <person name="Oliveira V.R."/>
            <person name="Pereira H.A."/>
            <person name="Rossi A."/>
            <person name="Sena J.A.D."/>
            <person name="Silva C."/>
            <person name="de Souza R.F."/>
            <person name="Spinola L.A.F."/>
            <person name="Takita M.A."/>
            <person name="Tamura R.E."/>
            <person name="Teixeira E.C."/>
            <person name="Tezza R.I.D."/>
            <person name="Trindade dos Santos M."/>
            <person name="Truffi D."/>
            <person name="Tsai S.M."/>
            <person name="White F.F."/>
            <person name="Setubal J.C."/>
            <person name="Kitajima J.P."/>
        </authorList>
    </citation>
    <scope>NUCLEOTIDE SEQUENCE [LARGE SCALE GENOMIC DNA]</scope>
    <source>
        <strain>306</strain>
    </source>
</reference>
<proteinExistence type="inferred from homology"/>
<gene>
    <name evidence="1" type="primary">rplJ</name>
    <name type="ordered locus">XAC0963</name>
</gene>
<evidence type="ECO:0000255" key="1">
    <source>
        <dbReference type="HAMAP-Rule" id="MF_00362"/>
    </source>
</evidence>
<evidence type="ECO:0000305" key="2"/>